<proteinExistence type="evidence at protein level"/>
<protein>
    <recommendedName>
        <fullName evidence="8">Short chain aldehyde dehydrogenase 1</fullName>
        <shortName evidence="8">ElADH1</shortName>
        <ecNumber evidence="6">1.1.1.1</ecNumber>
    </recommendedName>
    <alternativeName>
        <fullName evidence="10">Jolkinol C synthase</fullName>
        <ecNumber evidence="7">1.1.1.-</ecNumber>
    </alternativeName>
</protein>
<organism>
    <name type="scientific">Euphorbia lathyris</name>
    <name type="common">Caper spurge</name>
    <dbReference type="NCBI Taxonomy" id="212925"/>
    <lineage>
        <taxon>Eukaryota</taxon>
        <taxon>Viridiplantae</taxon>
        <taxon>Streptophyta</taxon>
        <taxon>Embryophyta</taxon>
        <taxon>Tracheophyta</taxon>
        <taxon>Spermatophyta</taxon>
        <taxon>Magnoliopsida</taxon>
        <taxon>eudicotyledons</taxon>
        <taxon>Gunneridae</taxon>
        <taxon>Pentapetalae</taxon>
        <taxon>rosids</taxon>
        <taxon>fabids</taxon>
        <taxon>Malpighiales</taxon>
        <taxon>Euphorbiaceae</taxon>
        <taxon>Euphorbioideae</taxon>
        <taxon>Euphorbieae</taxon>
        <taxon>Euphorbia</taxon>
        <taxon>Euphorbia subgen. Esula</taxon>
        <taxon>Euphorbia sect. Lathyris</taxon>
    </lineage>
</organism>
<keyword id="KW-0520">NAD</keyword>
<keyword id="KW-0560">Oxidoreductase</keyword>
<dbReference type="EC" id="1.1.1.1" evidence="6"/>
<dbReference type="EC" id="1.1.1.-" evidence="7"/>
<dbReference type="EMBL" id="KR350665">
    <property type="protein sequence ID" value="AMY98415.1"/>
    <property type="molecule type" value="mRNA"/>
</dbReference>
<dbReference type="SMR" id="A0A165U5V5"/>
<dbReference type="UniPathway" id="UPA00213"/>
<dbReference type="GO" id="GO:0016491">
    <property type="term" value="F:oxidoreductase activity"/>
    <property type="evidence" value="ECO:0007669"/>
    <property type="project" value="UniProtKB-KW"/>
</dbReference>
<dbReference type="GO" id="GO:0016114">
    <property type="term" value="P:terpenoid biosynthetic process"/>
    <property type="evidence" value="ECO:0007669"/>
    <property type="project" value="UniProtKB-UniPathway"/>
</dbReference>
<dbReference type="FunFam" id="3.40.50.720:FF:000084">
    <property type="entry name" value="Short-chain dehydrogenase reductase"/>
    <property type="match status" value="1"/>
</dbReference>
<dbReference type="Gene3D" id="3.40.50.720">
    <property type="entry name" value="NAD(P)-binding Rossmann-like Domain"/>
    <property type="match status" value="1"/>
</dbReference>
<dbReference type="InterPro" id="IPR036291">
    <property type="entry name" value="NAD(P)-bd_dom_sf"/>
</dbReference>
<dbReference type="InterPro" id="IPR002347">
    <property type="entry name" value="SDR_fam"/>
</dbReference>
<dbReference type="PANTHER" id="PTHR43180">
    <property type="entry name" value="3-OXOACYL-(ACYL-CARRIER-PROTEIN) REDUCTASE (AFU_ORTHOLOGUE AFUA_6G11210)"/>
    <property type="match status" value="1"/>
</dbReference>
<dbReference type="PANTHER" id="PTHR43180:SF67">
    <property type="entry name" value="SECOISOLARICIRESINOL DEHYDROGENASE"/>
    <property type="match status" value="1"/>
</dbReference>
<dbReference type="Pfam" id="PF13561">
    <property type="entry name" value="adh_short_C2"/>
    <property type="match status" value="1"/>
</dbReference>
<dbReference type="PRINTS" id="PR00081">
    <property type="entry name" value="GDHRDH"/>
</dbReference>
<dbReference type="SUPFAM" id="SSF51735">
    <property type="entry name" value="NAD(P)-binding Rossmann-fold domains"/>
    <property type="match status" value="1"/>
</dbReference>
<name>ADH1_EUPLT</name>
<evidence type="ECO:0000250" key="1">
    <source>
        <dbReference type="UniProtKB" id="I6Y778"/>
    </source>
</evidence>
<evidence type="ECO:0000250" key="2">
    <source>
        <dbReference type="UniProtKB" id="O93868"/>
    </source>
</evidence>
<evidence type="ECO:0000250" key="3">
    <source>
        <dbReference type="UniProtKB" id="P19337"/>
    </source>
</evidence>
<evidence type="ECO:0000250" key="4">
    <source>
        <dbReference type="UniProtKB" id="P48814"/>
    </source>
</evidence>
<evidence type="ECO:0000250" key="5">
    <source>
        <dbReference type="UniProtKB" id="Q8KES3"/>
    </source>
</evidence>
<evidence type="ECO:0000255" key="6">
    <source>
        <dbReference type="PROSITE-ProRule" id="PRU10001"/>
    </source>
</evidence>
<evidence type="ECO:0000269" key="7">
    <source>
    </source>
</evidence>
<evidence type="ECO:0000303" key="8">
    <source>
    </source>
</evidence>
<evidence type="ECO:0000305" key="9"/>
<evidence type="ECO:0000305" key="10">
    <source>
    </source>
</evidence>
<gene>
    <name evidence="8" type="primary">ADH1</name>
</gene>
<accession>A0A165U5V5</accession>
<reference key="1">
    <citation type="journal article" date="2016" name="Proc. Natl. Acad. Sci. U.S.A.">
        <title>Oxidation and cyclization of casbene in the biosynthesis of Euphorbia factors from mature seeds of Euphorbia lathyris L.</title>
        <authorList>
            <person name="Luo D."/>
            <person name="Callari R."/>
            <person name="Hamberger B."/>
            <person name="Wubshet S.G."/>
            <person name="Nielsen M.T."/>
            <person name="Andersen-Ranberg J."/>
            <person name="Hallstroem B.M."/>
            <person name="Cozzi F."/>
            <person name="Heider H."/>
            <person name="Lindberg Moeller B."/>
            <person name="Staerk D."/>
            <person name="Hamberger B."/>
        </authorList>
    </citation>
    <scope>NUCLEOTIDE SEQUENCE [MRNA]</scope>
    <scope>FUNCTION</scope>
    <scope>CATALYTIC ACTIVITY</scope>
    <scope>PATHWAY</scope>
    <scope>TISSUE SPECIFICITY</scope>
    <source>
        <tissue>Seed</tissue>
    </source>
</reference>
<comment type="function">
    <text evidence="7">Involved in the biosynthesis of macrocyclic lathyrane type diterpenoids (also called Euphorbia factors) natural products, including the cyclization route from casbene to jolkinol C, a precursor for ingenol mebutate that is used to treat actinic keratosis, a precancerous skin condition (PubMed:27506796). Catalyzes the conversion of 4,5,8-trihydroxycasbene into jolkinol C in presence of NAD (PubMed:27506796). Also mediates the formation of casbene dione derivative and 4-ketocasbene from 4-hydroxy-8-ketocasbene and 4-hydroxycasbene, respectively (PubMed:27506796). Together with CYP71D445, triggers the biosynthesis of 8-ketocasbene from 8-hydroxycasbene (PubMed:27506796).</text>
</comment>
<comment type="catalytic activity">
    <reaction evidence="7">
        <text>4,5,8-trihydroxycasbene + 2 NAD(+) = jolkinol C + 2 NADH + 2 H(+)</text>
        <dbReference type="Rhea" id="RHEA:65600"/>
        <dbReference type="ChEBI" id="CHEBI:15378"/>
        <dbReference type="ChEBI" id="CHEBI:57540"/>
        <dbReference type="ChEBI" id="CHEBI:57945"/>
        <dbReference type="ChEBI" id="CHEBI:156580"/>
        <dbReference type="ChEBI" id="CHEBI:157602"/>
    </reaction>
    <physiologicalReaction direction="left-to-right" evidence="7">
        <dbReference type="Rhea" id="RHEA:65601"/>
    </physiologicalReaction>
</comment>
<comment type="catalytic activity">
    <reaction evidence="6">
        <text>a secondary alcohol + NAD(+) = a ketone + NADH + H(+)</text>
        <dbReference type="Rhea" id="RHEA:10740"/>
        <dbReference type="ChEBI" id="CHEBI:15378"/>
        <dbReference type="ChEBI" id="CHEBI:17087"/>
        <dbReference type="ChEBI" id="CHEBI:35681"/>
        <dbReference type="ChEBI" id="CHEBI:57540"/>
        <dbReference type="ChEBI" id="CHEBI:57945"/>
        <dbReference type="EC" id="1.1.1.1"/>
    </reaction>
</comment>
<comment type="catalytic activity">
    <reaction evidence="6">
        <text>a primary alcohol + NAD(+) = an aldehyde + NADH + H(+)</text>
        <dbReference type="Rhea" id="RHEA:10736"/>
        <dbReference type="ChEBI" id="CHEBI:15378"/>
        <dbReference type="ChEBI" id="CHEBI:15734"/>
        <dbReference type="ChEBI" id="CHEBI:17478"/>
        <dbReference type="ChEBI" id="CHEBI:57540"/>
        <dbReference type="ChEBI" id="CHEBI:57945"/>
        <dbReference type="EC" id="1.1.1.1"/>
    </reaction>
</comment>
<comment type="pathway">
    <text evidence="7">Secondary metabolite biosynthesis; terpenoid biosynthesis.</text>
</comment>
<comment type="subunit">
    <text evidence="4">Homodimer.</text>
</comment>
<comment type="tissue specificity">
    <text evidence="7">Expressed in mature seeds.</text>
</comment>
<comment type="similarity">
    <text evidence="9">Belongs to the short-chain dehydrogenases/reductases (SDR) family.</text>
</comment>
<sequence>MNGCCSQDPTSKRLEGKVAVITGGASGIGACTVKLFVKHGAKVVIADVQDELGHSLCKEIGSEDVVTYVHCDVSSDSDVKNVVDSAVSKYGKLDIMFSNAGVSGGLDPRILATENDEFKKVFEVNVFGGFLAAKHAARVMIPEKKGCILFTSSNSAAIAIPGPHSYVVSKHALNGLMKNLSAELGQHGIRVNCVSPFGVVTPMMATAFGMKDADPEVVKATIEGLLASAANLKEVTLGAEDIANAALYLASDEAKYVSGLNLVVDGGYSVTNPSFTATLQKAFAVAHV</sequence>
<feature type="chain" id="PRO_0000453169" description="Short chain aldehyde dehydrogenase 1">
    <location>
        <begin position="1"/>
        <end position="288"/>
    </location>
</feature>
<feature type="active site" description="Proton donor" evidence="2">
    <location>
        <position position="153"/>
    </location>
</feature>
<feature type="active site" description="Proton acceptor" evidence="6">
    <location>
        <position position="166"/>
    </location>
</feature>
<feature type="active site" description="Proton donor/acceptor" evidence="3">
    <location>
        <position position="170"/>
    </location>
</feature>
<feature type="binding site" evidence="1">
    <location>
        <begin position="26"/>
        <end position="28"/>
    </location>
    <ligand>
        <name>NAD(+)</name>
        <dbReference type="ChEBI" id="CHEBI:57540"/>
    </ligand>
</feature>
<feature type="binding site" evidence="1">
    <location>
        <position position="47"/>
    </location>
    <ligand>
        <name>NAD(+)</name>
        <dbReference type="ChEBI" id="CHEBI:57540"/>
    </ligand>
</feature>
<feature type="binding site" evidence="1">
    <location>
        <begin position="72"/>
        <end position="73"/>
    </location>
    <ligand>
        <name>NAD(+)</name>
        <dbReference type="ChEBI" id="CHEBI:57540"/>
    </ligand>
</feature>
<feature type="binding site" evidence="1">
    <location>
        <begin position="99"/>
        <end position="101"/>
    </location>
    <ligand>
        <name>NAD(+)</name>
        <dbReference type="ChEBI" id="CHEBI:57540"/>
    </ligand>
</feature>
<feature type="binding site" evidence="5">
    <location>
        <position position="153"/>
    </location>
    <ligand>
        <name>substrate</name>
    </ligand>
</feature>
<feature type="binding site" evidence="1">
    <location>
        <position position="166"/>
    </location>
    <ligand>
        <name>NAD(+)</name>
        <dbReference type="ChEBI" id="CHEBI:57540"/>
    </ligand>
</feature>
<feature type="binding site" evidence="5">
    <location>
        <position position="166"/>
    </location>
    <ligand>
        <name>substrate</name>
    </ligand>
</feature>
<feature type="binding site" evidence="1">
    <location>
        <position position="170"/>
    </location>
    <ligand>
        <name>NAD(+)</name>
        <dbReference type="ChEBI" id="CHEBI:57540"/>
    </ligand>
</feature>
<feature type="binding site" evidence="1">
    <location>
        <position position="201"/>
    </location>
    <ligand>
        <name>NAD(+)</name>
        <dbReference type="ChEBI" id="CHEBI:57540"/>
    </ligand>
</feature>